<accession>Q9KSX8</accession>
<evidence type="ECO:0000255" key="1">
    <source>
        <dbReference type="HAMAP-Rule" id="MF_00144"/>
    </source>
</evidence>
<name>MNMA_VIBCH</name>
<proteinExistence type="inferred from homology"/>
<dbReference type="EC" id="2.8.1.13" evidence="1"/>
<dbReference type="EMBL" id="AE003852">
    <property type="protein sequence ID" value="AAF94287.1"/>
    <property type="molecule type" value="Genomic_DNA"/>
</dbReference>
<dbReference type="PIR" id="C82237">
    <property type="entry name" value="C82237"/>
</dbReference>
<dbReference type="RefSeq" id="NP_230773.1">
    <property type="nucleotide sequence ID" value="NC_002505.1"/>
</dbReference>
<dbReference type="SMR" id="Q9KSX8"/>
<dbReference type="STRING" id="243277.VC_1128"/>
<dbReference type="DNASU" id="2614398"/>
<dbReference type="EnsemblBacteria" id="AAF94287">
    <property type="protein sequence ID" value="AAF94287"/>
    <property type="gene ID" value="VC_1128"/>
</dbReference>
<dbReference type="KEGG" id="vch:VC_1128"/>
<dbReference type="PATRIC" id="fig|243277.26.peg.1077"/>
<dbReference type="eggNOG" id="COG0482">
    <property type="taxonomic scope" value="Bacteria"/>
</dbReference>
<dbReference type="HOGENOM" id="CLU_035188_1_0_6"/>
<dbReference type="Proteomes" id="UP000000584">
    <property type="component" value="Chromosome 1"/>
</dbReference>
<dbReference type="GO" id="GO:0005737">
    <property type="term" value="C:cytoplasm"/>
    <property type="evidence" value="ECO:0007669"/>
    <property type="project" value="UniProtKB-SubCell"/>
</dbReference>
<dbReference type="GO" id="GO:0005524">
    <property type="term" value="F:ATP binding"/>
    <property type="evidence" value="ECO:0007669"/>
    <property type="project" value="UniProtKB-KW"/>
</dbReference>
<dbReference type="GO" id="GO:0000049">
    <property type="term" value="F:tRNA binding"/>
    <property type="evidence" value="ECO:0007669"/>
    <property type="project" value="UniProtKB-KW"/>
</dbReference>
<dbReference type="GO" id="GO:0103016">
    <property type="term" value="F:tRNA-uridine 2-sulfurtransferase activity"/>
    <property type="evidence" value="ECO:0007669"/>
    <property type="project" value="UniProtKB-EC"/>
</dbReference>
<dbReference type="GO" id="GO:0002143">
    <property type="term" value="P:tRNA wobble position uridine thiolation"/>
    <property type="evidence" value="ECO:0000318"/>
    <property type="project" value="GO_Central"/>
</dbReference>
<dbReference type="CDD" id="cd01998">
    <property type="entry name" value="MnmA_TRMU-like"/>
    <property type="match status" value="1"/>
</dbReference>
<dbReference type="FunFam" id="2.30.30.280:FF:000001">
    <property type="entry name" value="tRNA-specific 2-thiouridylase MnmA"/>
    <property type="match status" value="1"/>
</dbReference>
<dbReference type="FunFam" id="2.40.30.10:FF:000023">
    <property type="entry name" value="tRNA-specific 2-thiouridylase MnmA"/>
    <property type="match status" value="1"/>
</dbReference>
<dbReference type="FunFam" id="3.40.50.620:FF:000004">
    <property type="entry name" value="tRNA-specific 2-thiouridylase MnmA"/>
    <property type="match status" value="1"/>
</dbReference>
<dbReference type="Gene3D" id="2.30.30.280">
    <property type="entry name" value="Adenine nucleotide alpha hydrolases-like domains"/>
    <property type="match status" value="1"/>
</dbReference>
<dbReference type="Gene3D" id="3.40.50.620">
    <property type="entry name" value="HUPs"/>
    <property type="match status" value="1"/>
</dbReference>
<dbReference type="Gene3D" id="2.40.30.10">
    <property type="entry name" value="Translation factors"/>
    <property type="match status" value="1"/>
</dbReference>
<dbReference type="HAMAP" id="MF_00144">
    <property type="entry name" value="tRNA_thiouridyl_MnmA"/>
    <property type="match status" value="1"/>
</dbReference>
<dbReference type="InterPro" id="IPR004506">
    <property type="entry name" value="MnmA-like"/>
</dbReference>
<dbReference type="InterPro" id="IPR046885">
    <property type="entry name" value="MnmA-like_C"/>
</dbReference>
<dbReference type="InterPro" id="IPR046884">
    <property type="entry name" value="MnmA-like_central"/>
</dbReference>
<dbReference type="InterPro" id="IPR023382">
    <property type="entry name" value="MnmA-like_central_sf"/>
</dbReference>
<dbReference type="InterPro" id="IPR014729">
    <property type="entry name" value="Rossmann-like_a/b/a_fold"/>
</dbReference>
<dbReference type="NCBIfam" id="NF001138">
    <property type="entry name" value="PRK00143.1"/>
    <property type="match status" value="1"/>
</dbReference>
<dbReference type="NCBIfam" id="TIGR00420">
    <property type="entry name" value="trmU"/>
    <property type="match status" value="1"/>
</dbReference>
<dbReference type="PANTHER" id="PTHR11933:SF5">
    <property type="entry name" value="MITOCHONDRIAL TRNA-SPECIFIC 2-THIOURIDYLASE 1"/>
    <property type="match status" value="1"/>
</dbReference>
<dbReference type="PANTHER" id="PTHR11933">
    <property type="entry name" value="TRNA 5-METHYLAMINOMETHYL-2-THIOURIDYLATE -METHYLTRANSFERASE"/>
    <property type="match status" value="1"/>
</dbReference>
<dbReference type="Pfam" id="PF03054">
    <property type="entry name" value="tRNA_Me_trans"/>
    <property type="match status" value="1"/>
</dbReference>
<dbReference type="Pfam" id="PF20258">
    <property type="entry name" value="tRNA_Me_trans_C"/>
    <property type="match status" value="1"/>
</dbReference>
<dbReference type="Pfam" id="PF20259">
    <property type="entry name" value="tRNA_Me_trans_M"/>
    <property type="match status" value="1"/>
</dbReference>
<dbReference type="SUPFAM" id="SSF52402">
    <property type="entry name" value="Adenine nucleotide alpha hydrolases-like"/>
    <property type="match status" value="1"/>
</dbReference>
<comment type="function">
    <text evidence="1">Catalyzes the 2-thiolation of uridine at the wobble position (U34) of tRNA, leading to the formation of s(2)U34.</text>
</comment>
<comment type="catalytic activity">
    <reaction evidence="1">
        <text>S-sulfanyl-L-cysteinyl-[protein] + uridine(34) in tRNA + AH2 + ATP = 2-thiouridine(34) in tRNA + L-cysteinyl-[protein] + A + AMP + diphosphate + H(+)</text>
        <dbReference type="Rhea" id="RHEA:47032"/>
        <dbReference type="Rhea" id="RHEA-COMP:10131"/>
        <dbReference type="Rhea" id="RHEA-COMP:11726"/>
        <dbReference type="Rhea" id="RHEA-COMP:11727"/>
        <dbReference type="Rhea" id="RHEA-COMP:11728"/>
        <dbReference type="ChEBI" id="CHEBI:13193"/>
        <dbReference type="ChEBI" id="CHEBI:15378"/>
        <dbReference type="ChEBI" id="CHEBI:17499"/>
        <dbReference type="ChEBI" id="CHEBI:29950"/>
        <dbReference type="ChEBI" id="CHEBI:30616"/>
        <dbReference type="ChEBI" id="CHEBI:33019"/>
        <dbReference type="ChEBI" id="CHEBI:61963"/>
        <dbReference type="ChEBI" id="CHEBI:65315"/>
        <dbReference type="ChEBI" id="CHEBI:87170"/>
        <dbReference type="ChEBI" id="CHEBI:456215"/>
        <dbReference type="EC" id="2.8.1.13"/>
    </reaction>
</comment>
<comment type="subcellular location">
    <subcellularLocation>
        <location evidence="1">Cytoplasm</location>
    </subcellularLocation>
</comment>
<comment type="similarity">
    <text evidence="1">Belongs to the MnmA/TRMU family.</text>
</comment>
<feature type="chain" id="PRO_0000121697" description="tRNA-specific 2-thiouridylase MnmA">
    <location>
        <begin position="1"/>
        <end position="372"/>
    </location>
</feature>
<feature type="region of interest" description="Interaction with target base in tRNA" evidence="1">
    <location>
        <begin position="103"/>
        <end position="105"/>
    </location>
</feature>
<feature type="region of interest" description="Interaction with tRNA" evidence="1">
    <location>
        <begin position="157"/>
        <end position="159"/>
    </location>
</feature>
<feature type="region of interest" description="Interaction with tRNA" evidence="1">
    <location>
        <begin position="319"/>
        <end position="320"/>
    </location>
</feature>
<feature type="active site" description="Nucleophile" evidence="1">
    <location>
        <position position="108"/>
    </location>
</feature>
<feature type="active site" description="Cysteine persulfide intermediate" evidence="1">
    <location>
        <position position="207"/>
    </location>
</feature>
<feature type="binding site" evidence="1">
    <location>
        <begin position="17"/>
        <end position="24"/>
    </location>
    <ligand>
        <name>ATP</name>
        <dbReference type="ChEBI" id="CHEBI:30616"/>
    </ligand>
</feature>
<feature type="binding site" evidence="1">
    <location>
        <position position="43"/>
    </location>
    <ligand>
        <name>ATP</name>
        <dbReference type="ChEBI" id="CHEBI:30616"/>
    </ligand>
</feature>
<feature type="binding site" evidence="1">
    <location>
        <position position="133"/>
    </location>
    <ligand>
        <name>ATP</name>
        <dbReference type="ChEBI" id="CHEBI:30616"/>
    </ligand>
</feature>
<feature type="site" description="Interaction with tRNA" evidence="1">
    <location>
        <position position="134"/>
    </location>
</feature>
<feature type="site" description="Interaction with tRNA" evidence="1">
    <location>
        <position position="352"/>
    </location>
</feature>
<feature type="disulfide bond" description="Alternate" evidence="1">
    <location>
        <begin position="108"/>
        <end position="207"/>
    </location>
</feature>
<gene>
    <name evidence="1" type="primary">mnmA</name>
    <name type="synonym">trmU</name>
    <name type="ordered locus">VC_1128</name>
</gene>
<protein>
    <recommendedName>
        <fullName evidence="1">tRNA-specific 2-thiouridylase MnmA</fullName>
        <ecNumber evidence="1">2.8.1.13</ecNumber>
    </recommendedName>
</protein>
<keyword id="KW-0067">ATP-binding</keyword>
<keyword id="KW-0963">Cytoplasm</keyword>
<keyword id="KW-1015">Disulfide bond</keyword>
<keyword id="KW-0547">Nucleotide-binding</keyword>
<keyword id="KW-1185">Reference proteome</keyword>
<keyword id="KW-0694">RNA-binding</keyword>
<keyword id="KW-0808">Transferase</keyword>
<keyword id="KW-0819">tRNA processing</keyword>
<keyword id="KW-0820">tRNA-binding</keyword>
<sequence>MMSVEHSANSQKKVIVGMSGGVDSSVSAYLLKQQGYQVEGLFMKNWEEDDNEEYCTAAEDLADAQAVCDKLGIPLHTINFAAEYWDNVFEYFLAEYKAGRTPNPDILCNKEIKFKAFLEFADEVLDADYIAMGHYVRRTFPQNGEKPQMLRGLDGNKDQSYFLYTLSHEQVARTLFPVGELEKPEVRRIAEEQGLITAKKKDSTGICFIGERKFTDFLSRYLPAQPGKIETPEGKVIGEHQGLMYHTLGQRKGLHIGGMKESSEQPWYVADKDLKRNVLIAVQGADHPLLKSHGLVAAQLHWVDRTPITEPVRCSVKTRYRQSDIACTIIPLSDDRIKVMFDEPQVAVTPGQSAVFYQGEICLGGGIIEERI</sequence>
<reference key="1">
    <citation type="journal article" date="2000" name="Nature">
        <title>DNA sequence of both chromosomes of the cholera pathogen Vibrio cholerae.</title>
        <authorList>
            <person name="Heidelberg J.F."/>
            <person name="Eisen J.A."/>
            <person name="Nelson W.C."/>
            <person name="Clayton R.A."/>
            <person name="Gwinn M.L."/>
            <person name="Dodson R.J."/>
            <person name="Haft D.H."/>
            <person name="Hickey E.K."/>
            <person name="Peterson J.D."/>
            <person name="Umayam L.A."/>
            <person name="Gill S.R."/>
            <person name="Nelson K.E."/>
            <person name="Read T.D."/>
            <person name="Tettelin H."/>
            <person name="Richardson D.L."/>
            <person name="Ermolaeva M.D."/>
            <person name="Vamathevan J.J."/>
            <person name="Bass S."/>
            <person name="Qin H."/>
            <person name="Dragoi I."/>
            <person name="Sellers P."/>
            <person name="McDonald L.A."/>
            <person name="Utterback T.R."/>
            <person name="Fleischmann R.D."/>
            <person name="Nierman W.C."/>
            <person name="White O."/>
            <person name="Salzberg S.L."/>
            <person name="Smith H.O."/>
            <person name="Colwell R.R."/>
            <person name="Mekalanos J.J."/>
            <person name="Venter J.C."/>
            <person name="Fraser C.M."/>
        </authorList>
    </citation>
    <scope>NUCLEOTIDE SEQUENCE [LARGE SCALE GENOMIC DNA]</scope>
    <source>
        <strain>ATCC 39315 / El Tor Inaba N16961</strain>
    </source>
</reference>
<organism>
    <name type="scientific">Vibrio cholerae serotype O1 (strain ATCC 39315 / El Tor Inaba N16961)</name>
    <dbReference type="NCBI Taxonomy" id="243277"/>
    <lineage>
        <taxon>Bacteria</taxon>
        <taxon>Pseudomonadati</taxon>
        <taxon>Pseudomonadota</taxon>
        <taxon>Gammaproteobacteria</taxon>
        <taxon>Vibrionales</taxon>
        <taxon>Vibrionaceae</taxon>
        <taxon>Vibrio</taxon>
    </lineage>
</organism>